<keyword id="KW-0489">Methyltransferase</keyword>
<keyword id="KW-0949">S-adenosyl-L-methionine</keyword>
<keyword id="KW-0808">Transferase</keyword>
<keyword id="KW-0831">Ubiquinone biosynthesis</keyword>
<proteinExistence type="inferred from homology"/>
<evidence type="ECO:0000255" key="1">
    <source>
        <dbReference type="HAMAP-Rule" id="MF_00472"/>
    </source>
</evidence>
<dbReference type="EC" id="2.1.1.222" evidence="1"/>
<dbReference type="EC" id="2.1.1.64" evidence="1"/>
<dbReference type="EMBL" id="CP001011">
    <property type="protein sequence ID" value="ACB92982.1"/>
    <property type="molecule type" value="Genomic_DNA"/>
</dbReference>
<dbReference type="RefSeq" id="WP_004088501.1">
    <property type="nucleotide sequence ID" value="NC_010577.1"/>
</dbReference>
<dbReference type="SMR" id="B2I705"/>
<dbReference type="GeneID" id="93905311"/>
<dbReference type="KEGG" id="xfn:XfasM23_1574"/>
<dbReference type="HOGENOM" id="CLU_042432_5_0_6"/>
<dbReference type="UniPathway" id="UPA00232"/>
<dbReference type="Proteomes" id="UP000001698">
    <property type="component" value="Chromosome"/>
</dbReference>
<dbReference type="GO" id="GO:0102208">
    <property type="term" value="F:2-polyprenyl-6-hydroxyphenol methylase activity"/>
    <property type="evidence" value="ECO:0007669"/>
    <property type="project" value="UniProtKB-EC"/>
</dbReference>
<dbReference type="GO" id="GO:0061542">
    <property type="term" value="F:3-demethylubiquinol 3-O-methyltransferase activity"/>
    <property type="evidence" value="ECO:0007669"/>
    <property type="project" value="UniProtKB-UniRule"/>
</dbReference>
<dbReference type="GO" id="GO:0010420">
    <property type="term" value="F:polyprenyldihydroxybenzoate methyltransferase activity"/>
    <property type="evidence" value="ECO:0007669"/>
    <property type="project" value="InterPro"/>
</dbReference>
<dbReference type="GO" id="GO:0032259">
    <property type="term" value="P:methylation"/>
    <property type="evidence" value="ECO:0007669"/>
    <property type="project" value="UniProtKB-KW"/>
</dbReference>
<dbReference type="CDD" id="cd02440">
    <property type="entry name" value="AdoMet_MTases"/>
    <property type="match status" value="1"/>
</dbReference>
<dbReference type="Gene3D" id="3.40.50.150">
    <property type="entry name" value="Vaccinia Virus protein VP39"/>
    <property type="match status" value="1"/>
</dbReference>
<dbReference type="HAMAP" id="MF_00472">
    <property type="entry name" value="UbiG"/>
    <property type="match status" value="1"/>
</dbReference>
<dbReference type="InterPro" id="IPR029063">
    <property type="entry name" value="SAM-dependent_MTases_sf"/>
</dbReference>
<dbReference type="InterPro" id="IPR010233">
    <property type="entry name" value="UbiG_MeTrfase"/>
</dbReference>
<dbReference type="NCBIfam" id="TIGR01983">
    <property type="entry name" value="UbiG"/>
    <property type="match status" value="1"/>
</dbReference>
<dbReference type="PANTHER" id="PTHR43464">
    <property type="entry name" value="METHYLTRANSFERASE"/>
    <property type="match status" value="1"/>
</dbReference>
<dbReference type="PANTHER" id="PTHR43464:SF19">
    <property type="entry name" value="UBIQUINONE BIOSYNTHESIS O-METHYLTRANSFERASE, MITOCHONDRIAL"/>
    <property type="match status" value="1"/>
</dbReference>
<dbReference type="Pfam" id="PF13489">
    <property type="entry name" value="Methyltransf_23"/>
    <property type="match status" value="1"/>
</dbReference>
<dbReference type="SUPFAM" id="SSF53335">
    <property type="entry name" value="S-adenosyl-L-methionine-dependent methyltransferases"/>
    <property type="match status" value="1"/>
</dbReference>
<name>UBIG_XYLF2</name>
<protein>
    <recommendedName>
        <fullName evidence="1">Ubiquinone biosynthesis O-methyltransferase</fullName>
    </recommendedName>
    <alternativeName>
        <fullName evidence="1">2-polyprenyl-6-hydroxyphenol methylase</fullName>
        <ecNumber evidence="1">2.1.1.222</ecNumber>
    </alternativeName>
    <alternativeName>
        <fullName evidence="1">3-demethylubiquinone 3-O-methyltransferase</fullName>
        <ecNumber evidence="1">2.1.1.64</ecNumber>
    </alternativeName>
</protein>
<comment type="function">
    <text evidence="1">O-methyltransferase that catalyzes the 2 O-methylation steps in the ubiquinone biosynthetic pathway.</text>
</comment>
<comment type="catalytic activity">
    <reaction evidence="1">
        <text>a 3-demethylubiquinol + S-adenosyl-L-methionine = a ubiquinol + S-adenosyl-L-homocysteine + H(+)</text>
        <dbReference type="Rhea" id="RHEA:44380"/>
        <dbReference type="Rhea" id="RHEA-COMP:9566"/>
        <dbReference type="Rhea" id="RHEA-COMP:10914"/>
        <dbReference type="ChEBI" id="CHEBI:15378"/>
        <dbReference type="ChEBI" id="CHEBI:17976"/>
        <dbReference type="ChEBI" id="CHEBI:57856"/>
        <dbReference type="ChEBI" id="CHEBI:59789"/>
        <dbReference type="ChEBI" id="CHEBI:84422"/>
        <dbReference type="EC" id="2.1.1.64"/>
    </reaction>
</comment>
<comment type="catalytic activity">
    <reaction evidence="1">
        <text>a 3-(all-trans-polyprenyl)benzene-1,2-diol + S-adenosyl-L-methionine = a 2-methoxy-6-(all-trans-polyprenyl)phenol + S-adenosyl-L-homocysteine + H(+)</text>
        <dbReference type="Rhea" id="RHEA:31411"/>
        <dbReference type="Rhea" id="RHEA-COMP:9550"/>
        <dbReference type="Rhea" id="RHEA-COMP:9551"/>
        <dbReference type="ChEBI" id="CHEBI:15378"/>
        <dbReference type="ChEBI" id="CHEBI:57856"/>
        <dbReference type="ChEBI" id="CHEBI:59789"/>
        <dbReference type="ChEBI" id="CHEBI:62729"/>
        <dbReference type="ChEBI" id="CHEBI:62731"/>
        <dbReference type="EC" id="2.1.1.222"/>
    </reaction>
</comment>
<comment type="pathway">
    <text evidence="1">Cofactor biosynthesis; ubiquinone biosynthesis.</text>
</comment>
<comment type="similarity">
    <text evidence="1">Belongs to the methyltransferase superfamily. UbiG/COQ3 family.</text>
</comment>
<reference key="1">
    <citation type="journal article" date="2010" name="J. Bacteriol.">
        <title>Whole genome sequences of two Xylella fastidiosa strains (M12 and M23) causing almond leaf scorch disease in California.</title>
        <authorList>
            <person name="Chen J."/>
            <person name="Xie G."/>
            <person name="Han S."/>
            <person name="Chertkov O."/>
            <person name="Sims D."/>
            <person name="Civerolo E.L."/>
        </authorList>
    </citation>
    <scope>NUCLEOTIDE SEQUENCE [LARGE SCALE GENOMIC DNA]</scope>
    <source>
        <strain>M23</strain>
    </source>
</reference>
<organism>
    <name type="scientific">Xylella fastidiosa (strain M23)</name>
    <dbReference type="NCBI Taxonomy" id="405441"/>
    <lineage>
        <taxon>Bacteria</taxon>
        <taxon>Pseudomonadati</taxon>
        <taxon>Pseudomonadota</taxon>
        <taxon>Gammaproteobacteria</taxon>
        <taxon>Lysobacterales</taxon>
        <taxon>Lysobacteraceae</taxon>
        <taxon>Xylella</taxon>
    </lineage>
</organism>
<sequence>MPSSYDRVSKNYRQSELDKFASFTSGWWDPHGPQKPLHALNPVRLDYISKRVSLSGARVLDVGCGGGLLSEALARQGAHVTAIDLVPELIKVARLHGLESGIQVDYRIQAIEDLLAEQPAPFDAIACMEMLEHVPDPAAIVDACAHLLKPGGRLFVSTINRTLAAFMLAVVGAEYVVRLLPKGTHQYKDFIRPAELAAWLRHAGLHLEDVSGMRYEPWRNRARLTARTDINYLACAISPEASHATE</sequence>
<accession>B2I705</accession>
<feature type="chain" id="PRO_1000199708" description="Ubiquinone biosynthesis O-methyltransferase">
    <location>
        <begin position="1"/>
        <end position="246"/>
    </location>
</feature>
<feature type="binding site" evidence="1">
    <location>
        <position position="44"/>
    </location>
    <ligand>
        <name>S-adenosyl-L-methionine</name>
        <dbReference type="ChEBI" id="CHEBI:59789"/>
    </ligand>
</feature>
<feature type="binding site" evidence="1">
    <location>
        <position position="63"/>
    </location>
    <ligand>
        <name>S-adenosyl-L-methionine</name>
        <dbReference type="ChEBI" id="CHEBI:59789"/>
    </ligand>
</feature>
<feature type="binding site" evidence="1">
    <location>
        <position position="84"/>
    </location>
    <ligand>
        <name>S-adenosyl-L-methionine</name>
        <dbReference type="ChEBI" id="CHEBI:59789"/>
    </ligand>
</feature>
<feature type="binding site" evidence="1">
    <location>
        <position position="128"/>
    </location>
    <ligand>
        <name>S-adenosyl-L-methionine</name>
        <dbReference type="ChEBI" id="CHEBI:59789"/>
    </ligand>
</feature>
<gene>
    <name evidence="1" type="primary">ubiG</name>
    <name type="ordered locus">XfasM23_1574</name>
</gene>